<evidence type="ECO:0000250" key="1"/>
<evidence type="ECO:0000255" key="2"/>
<evidence type="ECO:0000255" key="3">
    <source>
        <dbReference type="PROSITE-ProRule" id="PRU00040"/>
    </source>
</evidence>
<evidence type="ECO:0000305" key="4"/>
<accession>Q6X5T5</accession>
<proteinExistence type="evidence at transcript level"/>
<feature type="signal peptide" evidence="2">
    <location>
        <begin position="1"/>
        <end position="23"/>
    </location>
</feature>
<feature type="chain" id="PRO_0000355243" description="Snaclec 1">
    <location>
        <begin position="24"/>
        <end position="146"/>
    </location>
</feature>
<feature type="domain" description="C-type lectin" evidence="3">
    <location>
        <begin position="32"/>
        <end position="143"/>
    </location>
</feature>
<feature type="disulfide bond" evidence="3">
    <location>
        <begin position="25"/>
        <end position="36"/>
    </location>
</feature>
<feature type="disulfide bond" evidence="3">
    <location>
        <begin position="53"/>
        <end position="142"/>
    </location>
</feature>
<feature type="disulfide bond" description="Interchain" evidence="3">
    <location>
        <position position="98"/>
    </location>
</feature>
<feature type="disulfide bond" evidence="3">
    <location>
        <begin position="119"/>
        <end position="134"/>
    </location>
</feature>
<dbReference type="EMBL" id="AY254325">
    <property type="protein sequence ID" value="AAQ01206.1"/>
    <property type="molecule type" value="mRNA"/>
</dbReference>
<dbReference type="SMR" id="Q6X5T5"/>
<dbReference type="GO" id="GO:0005576">
    <property type="term" value="C:extracellular region"/>
    <property type="evidence" value="ECO:0007669"/>
    <property type="project" value="UniProtKB-SubCell"/>
</dbReference>
<dbReference type="GO" id="GO:0090729">
    <property type="term" value="F:toxin activity"/>
    <property type="evidence" value="ECO:0007669"/>
    <property type="project" value="UniProtKB-KW"/>
</dbReference>
<dbReference type="FunFam" id="3.10.100.10:FF:000087">
    <property type="entry name" value="Snaclec rhodocetin subunit delta"/>
    <property type="match status" value="1"/>
</dbReference>
<dbReference type="Gene3D" id="3.10.100.10">
    <property type="entry name" value="Mannose-Binding Protein A, subunit A"/>
    <property type="match status" value="1"/>
</dbReference>
<dbReference type="InterPro" id="IPR001304">
    <property type="entry name" value="C-type_lectin-like"/>
</dbReference>
<dbReference type="InterPro" id="IPR016186">
    <property type="entry name" value="C-type_lectin-like/link_sf"/>
</dbReference>
<dbReference type="InterPro" id="IPR050111">
    <property type="entry name" value="C-type_lectin/snaclec_domain"/>
</dbReference>
<dbReference type="InterPro" id="IPR018378">
    <property type="entry name" value="C-type_lectin_CS"/>
</dbReference>
<dbReference type="InterPro" id="IPR016187">
    <property type="entry name" value="CTDL_fold"/>
</dbReference>
<dbReference type="PANTHER" id="PTHR22803">
    <property type="entry name" value="MANNOSE, PHOSPHOLIPASE, LECTIN RECEPTOR RELATED"/>
    <property type="match status" value="1"/>
</dbReference>
<dbReference type="Pfam" id="PF00059">
    <property type="entry name" value="Lectin_C"/>
    <property type="match status" value="1"/>
</dbReference>
<dbReference type="SMART" id="SM00034">
    <property type="entry name" value="CLECT"/>
    <property type="match status" value="1"/>
</dbReference>
<dbReference type="SUPFAM" id="SSF56436">
    <property type="entry name" value="C-type lectin-like"/>
    <property type="match status" value="1"/>
</dbReference>
<dbReference type="PROSITE" id="PS00615">
    <property type="entry name" value="C_TYPE_LECTIN_1"/>
    <property type="match status" value="1"/>
</dbReference>
<dbReference type="PROSITE" id="PS50041">
    <property type="entry name" value="C_TYPE_LECTIN_2"/>
    <property type="match status" value="1"/>
</dbReference>
<protein>
    <recommendedName>
        <fullName>Snaclec 1</fullName>
    </recommendedName>
    <alternativeName>
        <fullName>C-type lectin 1</fullName>
    </alternativeName>
</protein>
<reference key="1">
    <citation type="journal article" date="2003" name="Gene">
        <title>Novel sequences encoding venom C-type lectins are conserved in phylogenetically and geographically distinct Echis and Bitis viper species.</title>
        <authorList>
            <person name="Harrison R.A."/>
            <person name="Oliver J."/>
            <person name="Hasson S.S."/>
            <person name="Bharati K."/>
            <person name="Theakston R.D.G."/>
        </authorList>
    </citation>
    <scope>NUCLEOTIDE SEQUENCE [MRNA]</scope>
    <source>
        <tissue>Venom gland</tissue>
    </source>
</reference>
<organism>
    <name type="scientific">Bitis arietans</name>
    <name type="common">African puff adder</name>
    <dbReference type="NCBI Taxonomy" id="8692"/>
    <lineage>
        <taxon>Eukaryota</taxon>
        <taxon>Metazoa</taxon>
        <taxon>Chordata</taxon>
        <taxon>Craniata</taxon>
        <taxon>Vertebrata</taxon>
        <taxon>Euteleostomi</taxon>
        <taxon>Lepidosauria</taxon>
        <taxon>Squamata</taxon>
        <taxon>Bifurcata</taxon>
        <taxon>Unidentata</taxon>
        <taxon>Episquamata</taxon>
        <taxon>Toxicofera</taxon>
        <taxon>Serpentes</taxon>
        <taxon>Colubroidea</taxon>
        <taxon>Viperidae</taxon>
        <taxon>Viperinae</taxon>
        <taxon>Bitis</taxon>
    </lineage>
</organism>
<comment type="function">
    <text evidence="1">Interferes with one step of hemostasis (modulation of platelet aggregation, or coagulation cascade, for example).</text>
</comment>
<comment type="subunit">
    <text evidence="1">Heterodimer; disulfide-linked.</text>
</comment>
<comment type="subcellular location">
    <subcellularLocation>
        <location evidence="1">Secreted</location>
    </subcellularLocation>
</comment>
<comment type="tissue specificity">
    <text>Expressed by the venom gland.</text>
</comment>
<comment type="miscellaneous">
    <text>Shows greater sequence similarity to the beta than alpha subunits compared to other heterodimer snaclecs.</text>
</comment>
<comment type="similarity">
    <text evidence="4">Belongs to the snaclec family.</text>
</comment>
<keyword id="KW-1015">Disulfide bond</keyword>
<keyword id="KW-1199">Hemostasis impairing toxin</keyword>
<keyword id="KW-0964">Secreted</keyword>
<keyword id="KW-0732">Signal</keyword>
<keyword id="KW-0800">Toxin</keyword>
<name>SL1_BITAR</name>
<sequence>MGRFIFISFGLLVVFLSLSGTEADCLPDWFHYEGHCYRVFDEPKTWADAEKFCSEQANGGHLVSVHSRKEAGLVGVLAYQTLESPIVWMGLSKVWNQCDWGWTNGAKLKYEARAEESYCIHITSKKKEWKSLPCRNYGHFVCKSPA</sequence>